<gene>
    <name type="primary">cgi121</name>
    <name type="ORF">NCU02935</name>
</gene>
<proteinExistence type="inferred from homology"/>
<reference key="1">
    <citation type="journal article" date="2003" name="Nature">
        <title>The genome sequence of the filamentous fungus Neurospora crassa.</title>
        <authorList>
            <person name="Galagan J.E."/>
            <person name="Calvo S.E."/>
            <person name="Borkovich K.A."/>
            <person name="Selker E.U."/>
            <person name="Read N.D."/>
            <person name="Jaffe D.B."/>
            <person name="FitzHugh W."/>
            <person name="Ma L.-J."/>
            <person name="Smirnov S."/>
            <person name="Purcell S."/>
            <person name="Rehman B."/>
            <person name="Elkins T."/>
            <person name="Engels R."/>
            <person name="Wang S."/>
            <person name="Nielsen C.B."/>
            <person name="Butler J."/>
            <person name="Endrizzi M."/>
            <person name="Qui D."/>
            <person name="Ianakiev P."/>
            <person name="Bell-Pedersen D."/>
            <person name="Nelson M.A."/>
            <person name="Werner-Washburne M."/>
            <person name="Selitrennikoff C.P."/>
            <person name="Kinsey J.A."/>
            <person name="Braun E.L."/>
            <person name="Zelter A."/>
            <person name="Schulte U."/>
            <person name="Kothe G.O."/>
            <person name="Jedd G."/>
            <person name="Mewes H.-W."/>
            <person name="Staben C."/>
            <person name="Marcotte E."/>
            <person name="Greenberg D."/>
            <person name="Roy A."/>
            <person name="Foley K."/>
            <person name="Naylor J."/>
            <person name="Stange-Thomann N."/>
            <person name="Barrett R."/>
            <person name="Gnerre S."/>
            <person name="Kamal M."/>
            <person name="Kamvysselis M."/>
            <person name="Mauceli E.W."/>
            <person name="Bielke C."/>
            <person name="Rudd S."/>
            <person name="Frishman D."/>
            <person name="Krystofova S."/>
            <person name="Rasmussen C."/>
            <person name="Metzenberg R.L."/>
            <person name="Perkins D.D."/>
            <person name="Kroken S."/>
            <person name="Cogoni C."/>
            <person name="Macino G."/>
            <person name="Catcheside D.E.A."/>
            <person name="Li W."/>
            <person name="Pratt R.J."/>
            <person name="Osmani S.A."/>
            <person name="DeSouza C.P.C."/>
            <person name="Glass N.L."/>
            <person name="Orbach M.J."/>
            <person name="Berglund J.A."/>
            <person name="Voelker R."/>
            <person name="Yarden O."/>
            <person name="Plamann M."/>
            <person name="Seiler S."/>
            <person name="Dunlap J.C."/>
            <person name="Radford A."/>
            <person name="Aramayo R."/>
            <person name="Natvig D.O."/>
            <person name="Alex L.A."/>
            <person name="Mannhaupt G."/>
            <person name="Ebbole D.J."/>
            <person name="Freitag M."/>
            <person name="Paulsen I."/>
            <person name="Sachs M.S."/>
            <person name="Lander E.S."/>
            <person name="Nusbaum C."/>
            <person name="Birren B.W."/>
        </authorList>
    </citation>
    <scope>NUCLEOTIDE SEQUENCE [LARGE SCALE GENOMIC DNA]</scope>
    <source>
        <strain>ATCC 24698 / 74-OR23-1A / CBS 708.71 / DSM 1257 / FGSC 987</strain>
    </source>
</reference>
<protein>
    <recommendedName>
        <fullName>EKC/KEOPS complex subunit cgi121</fullName>
    </recommendedName>
</protein>
<sequence>MALETLQIEHVPSDHHVYAALFRDVQNVDFLQAQLIGKNPEFEYAFIDASVIISRTHLFAAIFRALNTLTEGTLQTPNVHSDIVIGLSPTNNISESYRRYGLTPSKTRDVLVIKIVYPKLSSENSTITSEQQPTPESIWQHLTTHIQGTPVPLTNEELAKSTDWAKVRKYYKLNGVPGVERIDKADEEGRRKEMEGLVISGIALRGL</sequence>
<evidence type="ECO:0000250" key="1"/>
<evidence type="ECO:0000305" key="2"/>
<dbReference type="EMBL" id="CM002236">
    <property type="protein sequence ID" value="EAA36381.1"/>
    <property type="molecule type" value="Genomic_DNA"/>
</dbReference>
<dbReference type="RefSeq" id="XP_965617.1">
    <property type="nucleotide sequence ID" value="XM_960524.2"/>
</dbReference>
<dbReference type="SMR" id="Q7SHG9"/>
<dbReference type="FunCoup" id="Q7SHG9">
    <property type="interactions" value="483"/>
</dbReference>
<dbReference type="STRING" id="367110.Q7SHG9"/>
<dbReference type="PaxDb" id="5141-EFNCRP00000002289"/>
<dbReference type="EnsemblFungi" id="EAA36381">
    <property type="protein sequence ID" value="EAA36381"/>
    <property type="gene ID" value="NCU02935"/>
</dbReference>
<dbReference type="GeneID" id="3881742"/>
<dbReference type="KEGG" id="ncr:NCU02935"/>
<dbReference type="VEuPathDB" id="FungiDB:NCU02935"/>
<dbReference type="HOGENOM" id="CLU_065847_1_0_1"/>
<dbReference type="InParanoid" id="Q7SHG9"/>
<dbReference type="OMA" id="IVCRMST"/>
<dbReference type="OrthoDB" id="329139at2759"/>
<dbReference type="Proteomes" id="UP000001805">
    <property type="component" value="Chromosome 1, Linkage Group I"/>
</dbReference>
<dbReference type="GO" id="GO:0000781">
    <property type="term" value="C:chromosome, telomeric region"/>
    <property type="evidence" value="ECO:0007669"/>
    <property type="project" value="UniProtKB-SubCell"/>
</dbReference>
<dbReference type="GO" id="GO:0005829">
    <property type="term" value="C:cytosol"/>
    <property type="evidence" value="ECO:0000318"/>
    <property type="project" value="GO_Central"/>
</dbReference>
<dbReference type="GO" id="GO:0000408">
    <property type="term" value="C:EKC/KEOPS complex"/>
    <property type="evidence" value="ECO:0000318"/>
    <property type="project" value="GO_Central"/>
</dbReference>
<dbReference type="GO" id="GO:0005634">
    <property type="term" value="C:nucleus"/>
    <property type="evidence" value="ECO:0000318"/>
    <property type="project" value="GO_Central"/>
</dbReference>
<dbReference type="GO" id="GO:0002949">
    <property type="term" value="P:tRNA threonylcarbamoyladenosine modification"/>
    <property type="evidence" value="ECO:0000318"/>
    <property type="project" value="GO_Central"/>
</dbReference>
<dbReference type="Gene3D" id="3.30.2380.10">
    <property type="entry name" value="CGI121/TPRKB"/>
    <property type="match status" value="1"/>
</dbReference>
<dbReference type="InterPro" id="IPR013926">
    <property type="entry name" value="CGI121/TPRKB"/>
</dbReference>
<dbReference type="InterPro" id="IPR036504">
    <property type="entry name" value="CGI121/TPRKB_sf"/>
</dbReference>
<dbReference type="PANTHER" id="PTHR15840">
    <property type="entry name" value="CGI-121 FAMILY MEMBER"/>
    <property type="match status" value="1"/>
</dbReference>
<dbReference type="PANTHER" id="PTHR15840:SF10">
    <property type="entry name" value="EKC_KEOPS COMPLEX SUBUNIT TPRKB"/>
    <property type="match status" value="1"/>
</dbReference>
<dbReference type="Pfam" id="PF08617">
    <property type="entry name" value="CGI-121"/>
    <property type="match status" value="1"/>
</dbReference>
<dbReference type="SUPFAM" id="SSF143870">
    <property type="entry name" value="PF0523-like"/>
    <property type="match status" value="1"/>
</dbReference>
<accession>Q7SHG9</accession>
<keyword id="KW-0010">Activator</keyword>
<keyword id="KW-0158">Chromosome</keyword>
<keyword id="KW-0539">Nucleus</keyword>
<keyword id="KW-1185">Reference proteome</keyword>
<keyword id="KW-0779">Telomere</keyword>
<keyword id="KW-0804">Transcription</keyword>
<keyword id="KW-0805">Transcription regulation</keyword>
<keyword id="KW-0819">tRNA processing</keyword>
<feature type="chain" id="PRO_0000279215" description="EKC/KEOPS complex subunit cgi121">
    <location>
        <begin position="1"/>
        <end position="207"/>
    </location>
</feature>
<comment type="function">
    <text evidence="1">Component of the EKC/KEOPS complex that is required for the formation of a threonylcarbamoyl group on adenosine at position 37 (t(6)A37) in tRNAs that read codons beginning with adenine. The complex is probably involved in the transfer of the threonylcarbamoyl moiety of threonylcarbamoyl-AMP (TC-AMP) to the N6 group of A37. Cgi121 acts as an allosteric effector that regulates the t(6)A activity of the complex. The EKC/KEOPS complex also promotes both telomere uncapping and telomere elongation. The complex is required for efficient recruitment of transcriptional coactivators. Cgi121 is not required for tRNA modification (By similarity).</text>
</comment>
<comment type="subunit">
    <text evidence="1">Component of the EKC/KEOPS complex composed of at least bud32, cgi121, gon7, kae1 and pcc1; the whole complex dimerizes.</text>
</comment>
<comment type="subcellular location">
    <subcellularLocation>
        <location evidence="1">Nucleus</location>
    </subcellularLocation>
    <subcellularLocation>
        <location evidence="1">Chromosome</location>
        <location evidence="1">Telomere</location>
    </subcellularLocation>
</comment>
<comment type="similarity">
    <text evidence="2">Belongs to the CGI121/TPRKB family.</text>
</comment>
<name>CG121_NEUCR</name>
<organism>
    <name type="scientific">Neurospora crassa (strain ATCC 24698 / 74-OR23-1A / CBS 708.71 / DSM 1257 / FGSC 987)</name>
    <dbReference type="NCBI Taxonomy" id="367110"/>
    <lineage>
        <taxon>Eukaryota</taxon>
        <taxon>Fungi</taxon>
        <taxon>Dikarya</taxon>
        <taxon>Ascomycota</taxon>
        <taxon>Pezizomycotina</taxon>
        <taxon>Sordariomycetes</taxon>
        <taxon>Sordariomycetidae</taxon>
        <taxon>Sordariales</taxon>
        <taxon>Sordariaceae</taxon>
        <taxon>Neurospora</taxon>
    </lineage>
</organism>